<proteinExistence type="inferred from homology"/>
<evidence type="ECO:0000250" key="1">
    <source>
        <dbReference type="UniProtKB" id="P00730"/>
    </source>
</evidence>
<evidence type="ECO:0000250" key="2">
    <source>
        <dbReference type="UniProtKB" id="P15085"/>
    </source>
</evidence>
<evidence type="ECO:0000250" key="3">
    <source>
        <dbReference type="UniProtKB" id="P38836"/>
    </source>
</evidence>
<evidence type="ECO:0000255" key="4"/>
<evidence type="ECO:0000255" key="5">
    <source>
        <dbReference type="PROSITE-ProRule" id="PRU01379"/>
    </source>
</evidence>
<evidence type="ECO:0000305" key="6"/>
<accession>B8M2K0</accession>
<organism>
    <name type="scientific">Talaromyces stipitatus (strain ATCC 10500 / CBS 375.48 / QM 6759 / NRRL 1006)</name>
    <name type="common">Penicillium stipitatum</name>
    <dbReference type="NCBI Taxonomy" id="441959"/>
    <lineage>
        <taxon>Eukaryota</taxon>
        <taxon>Fungi</taxon>
        <taxon>Dikarya</taxon>
        <taxon>Ascomycota</taxon>
        <taxon>Pezizomycotina</taxon>
        <taxon>Eurotiomycetes</taxon>
        <taxon>Eurotiomycetidae</taxon>
        <taxon>Eurotiales</taxon>
        <taxon>Trichocomaceae</taxon>
        <taxon>Talaromyces</taxon>
        <taxon>Talaromyces sect. Talaromyces</taxon>
    </lineage>
</organism>
<comment type="function">
    <text evidence="3">Inactive carboxypeptidase that may play a role in cell wall organization and biogenesis.</text>
</comment>
<comment type="cofactor">
    <cofactor evidence="1">
        <name>Zn(2+)</name>
        <dbReference type="ChEBI" id="CHEBI:29105"/>
    </cofactor>
    <text evidence="1">Binds 1 zinc ion per subunit.</text>
</comment>
<comment type="subcellular location">
    <subcellularLocation>
        <location evidence="3">Vacuole</location>
    </subcellularLocation>
    <subcellularLocation>
        <location evidence="3">Secreted</location>
    </subcellularLocation>
</comment>
<comment type="similarity">
    <text evidence="6">Belongs to the peptidase M14 family.</text>
</comment>
<comment type="caution">
    <text evidence="3">Lacks the conserved Glu residue in position 490 essential for carbopeptidase activity. The mature form lacks catalytic activity towards synthetic peptide substrates.</text>
</comment>
<dbReference type="EMBL" id="EQ962653">
    <property type="protein sequence ID" value="EED21911.1"/>
    <property type="molecule type" value="Genomic_DNA"/>
</dbReference>
<dbReference type="RefSeq" id="XP_002478874.1">
    <property type="nucleotide sequence ID" value="XM_002478829.1"/>
</dbReference>
<dbReference type="SMR" id="B8M2K0"/>
<dbReference type="FunCoup" id="B8M2K0">
    <property type="interactions" value="839"/>
</dbReference>
<dbReference type="STRING" id="441959.B8M2K0"/>
<dbReference type="GlyCosmos" id="B8M2K0">
    <property type="glycosylation" value="2 sites, No reported glycans"/>
</dbReference>
<dbReference type="GeneID" id="8098538"/>
<dbReference type="VEuPathDB" id="FungiDB:TSTA_091520"/>
<dbReference type="eggNOG" id="KOG2650">
    <property type="taxonomic scope" value="Eukaryota"/>
</dbReference>
<dbReference type="HOGENOM" id="CLU_019326_1_0_1"/>
<dbReference type="InParanoid" id="B8M2K0"/>
<dbReference type="OMA" id="WFYHQLH"/>
<dbReference type="OrthoDB" id="3626597at2759"/>
<dbReference type="PhylomeDB" id="B8M2K0"/>
<dbReference type="Proteomes" id="UP000001745">
    <property type="component" value="Unassembled WGS sequence"/>
</dbReference>
<dbReference type="GO" id="GO:0005576">
    <property type="term" value="C:extracellular region"/>
    <property type="evidence" value="ECO:0007669"/>
    <property type="project" value="UniProtKB-SubCell"/>
</dbReference>
<dbReference type="GO" id="GO:0005773">
    <property type="term" value="C:vacuole"/>
    <property type="evidence" value="ECO:0007669"/>
    <property type="project" value="UniProtKB-SubCell"/>
</dbReference>
<dbReference type="GO" id="GO:0008270">
    <property type="term" value="F:zinc ion binding"/>
    <property type="evidence" value="ECO:0007669"/>
    <property type="project" value="InterPro"/>
</dbReference>
<dbReference type="GO" id="GO:0071555">
    <property type="term" value="P:cell wall organization"/>
    <property type="evidence" value="ECO:0007669"/>
    <property type="project" value="UniProtKB-KW"/>
</dbReference>
<dbReference type="GO" id="GO:0006508">
    <property type="term" value="P:proteolysis"/>
    <property type="evidence" value="ECO:0007669"/>
    <property type="project" value="InterPro"/>
</dbReference>
<dbReference type="CDD" id="cd03860">
    <property type="entry name" value="M14_CP_A-B_like"/>
    <property type="match status" value="1"/>
</dbReference>
<dbReference type="FunFam" id="3.40.630.10:FF:000060">
    <property type="entry name" value="Putative metallocarboxypeptidase ecm14"/>
    <property type="match status" value="1"/>
</dbReference>
<dbReference type="Gene3D" id="3.40.630.10">
    <property type="entry name" value="Zn peptidases"/>
    <property type="match status" value="1"/>
</dbReference>
<dbReference type="InterPro" id="IPR000834">
    <property type="entry name" value="Peptidase_M14"/>
</dbReference>
<dbReference type="PANTHER" id="PTHR11705:SF147">
    <property type="entry name" value="INACTIVE METALLOCARBOXYPEPTIDASE ECM14"/>
    <property type="match status" value="1"/>
</dbReference>
<dbReference type="PANTHER" id="PTHR11705">
    <property type="entry name" value="PROTEASE FAMILY M14 CARBOXYPEPTIDASE A,B"/>
    <property type="match status" value="1"/>
</dbReference>
<dbReference type="Pfam" id="PF00246">
    <property type="entry name" value="Peptidase_M14"/>
    <property type="match status" value="1"/>
</dbReference>
<dbReference type="PRINTS" id="PR00765">
    <property type="entry name" value="CRBOXYPTASEA"/>
</dbReference>
<dbReference type="SMART" id="SM00631">
    <property type="entry name" value="Zn_pept"/>
    <property type="match status" value="1"/>
</dbReference>
<dbReference type="SUPFAM" id="SSF54897">
    <property type="entry name" value="Protease propeptides/inhibitors"/>
    <property type="match status" value="1"/>
</dbReference>
<dbReference type="SUPFAM" id="SSF53187">
    <property type="entry name" value="Zn-dependent exopeptidases"/>
    <property type="match status" value="1"/>
</dbReference>
<dbReference type="PROSITE" id="PS00132">
    <property type="entry name" value="CARBOXYPEPT_ZN_1"/>
    <property type="match status" value="1"/>
</dbReference>
<dbReference type="PROSITE" id="PS52035">
    <property type="entry name" value="PEPTIDASE_M14"/>
    <property type="match status" value="1"/>
</dbReference>
<reference key="1">
    <citation type="journal article" date="2015" name="Genome Announc.">
        <title>Genome sequence of the AIDS-associated pathogen Penicillium marneffei (ATCC18224) and its near taxonomic relative Talaromyces stipitatus (ATCC10500).</title>
        <authorList>
            <person name="Nierman W.C."/>
            <person name="Fedorova-Abrams N.D."/>
            <person name="Andrianopoulos A."/>
        </authorList>
    </citation>
    <scope>NUCLEOTIDE SEQUENCE [LARGE SCALE GENOMIC DNA]</scope>
    <source>
        <strain>ATCC 10500 / CBS 375.48 / QM 6759 / NRRL 1006</strain>
    </source>
</reference>
<feature type="signal peptide" evidence="4">
    <location>
        <begin position="1"/>
        <end position="22"/>
    </location>
</feature>
<feature type="propeptide" id="PRO_0000453252" evidence="3">
    <location>
        <begin position="23"/>
        <end position="175"/>
    </location>
</feature>
<feature type="chain" id="PRO_0000411191" description="Inactive metallocarboxypeptidase ecm14">
    <location>
        <begin position="176"/>
        <end position="592"/>
    </location>
</feature>
<feature type="domain" description="Peptidase M14" evidence="5">
    <location>
        <begin position="203"/>
        <end position="524"/>
    </location>
</feature>
<feature type="binding site" evidence="1">
    <location>
        <begin position="267"/>
        <end position="270"/>
    </location>
    <ligand>
        <name>substrate</name>
    </ligand>
</feature>
<feature type="binding site" evidence="5">
    <location>
        <position position="267"/>
    </location>
    <ligand>
        <name>Zn(2+)</name>
        <dbReference type="ChEBI" id="CHEBI:29105"/>
        <note>catalytic</note>
    </ligand>
</feature>
<feature type="binding site" evidence="5">
    <location>
        <position position="270"/>
    </location>
    <ligand>
        <name>Zn(2+)</name>
        <dbReference type="ChEBI" id="CHEBI:29105"/>
        <note>catalytic</note>
    </ligand>
</feature>
<feature type="binding site" evidence="1">
    <location>
        <position position="325"/>
    </location>
    <ligand>
        <name>substrate</name>
    </ligand>
</feature>
<feature type="binding site" evidence="1">
    <location>
        <begin position="342"/>
        <end position="343"/>
    </location>
    <ligand>
        <name>substrate</name>
    </ligand>
</feature>
<feature type="binding site" evidence="5">
    <location>
        <position position="399"/>
    </location>
    <ligand>
        <name>Zn(2+)</name>
        <dbReference type="ChEBI" id="CHEBI:29105"/>
        <note>catalytic</note>
    </ligand>
</feature>
<feature type="binding site" evidence="1">
    <location>
        <begin position="400"/>
        <end position="401"/>
    </location>
    <ligand>
        <name>substrate</name>
    </ligand>
</feature>
<feature type="glycosylation site" description="N-linked (GlcNAc...) asparagine" evidence="4">
    <location>
        <position position="383"/>
    </location>
</feature>
<feature type="glycosylation site" description="N-linked (GlcNAc...) asparagine" evidence="4">
    <location>
        <position position="548"/>
    </location>
</feature>
<feature type="disulfide bond" evidence="2">
    <location>
        <begin position="336"/>
        <end position="359"/>
    </location>
</feature>
<protein>
    <recommendedName>
        <fullName evidence="6">Inactive metallocarboxypeptidase ecm14</fullName>
    </recommendedName>
</protein>
<name>ECM14_TALSN</name>
<keyword id="KW-0961">Cell wall biogenesis/degradation</keyword>
<keyword id="KW-1015">Disulfide bond</keyword>
<keyword id="KW-0325">Glycoprotein</keyword>
<keyword id="KW-0479">Metal-binding</keyword>
<keyword id="KW-1185">Reference proteome</keyword>
<keyword id="KW-0964">Secreted</keyword>
<keyword id="KW-0732">Signal</keyword>
<keyword id="KW-0926">Vacuole</keyword>
<keyword id="KW-0862">Zinc</keyword>
<sequence length="592" mass="67243">MYRQDHVFVVLCAVLLAGQVTAVPAGTGINPHSPPLGPFESVRFASQTQSQIASSRGPFTWLRDTVIERIWGIDKKHSNKVGSQPRPEKSWSRYGSDIVLRMEVHSTEEVEALADAVNILFLDVWDSNENYVDIRMAKEVVPSLLGLLPQSLQKSHTLLIEDLSKAIYESRYPTRDYQRHTIDQTDCHTVPRPLDVADLFFDHYQPFNVILQWMRLIVSMFPSHAQLVNVGVTHEGRDIPAFRLGVRSRDDEQEGPRKTIMIVGGSHAREWISTSTVAYIAFQLVTEFGNSVAITKLLEDFDWVLVPTINPDGYVYSWDMDRLWRKNRQPTGLPFCPGIDLDRSWGYEWDGQGTRANPCSESYAGNNPFDSIETRTIAEWAYNQTQDKRTDFIGFLDLHSYSQQILYPYSYSCSTVPPTLENLEELAFGIAKAIRMTNQEAYAVKSACEGVVTTDKGNGQRVSANVESTGGSALDWFYHQLHAKYSYQIKLRDKGMYGFLLPPEHIVPTGREIFNSVLVLGHFLLGEDANALEWEFIPGSKSTSEQENGSSRTFDRLFFNMNEDELEKPGNDRDYSSVVEEDVYQDEGWGLW</sequence>
<gene>
    <name type="primary">ecm14</name>
    <name type="ORF">TSTA_091520</name>
</gene>